<protein>
    <recommendedName>
        <fullName>Oxygen-evolving enhancer protein 2, chloroplastic</fullName>
        <shortName>OEE2</shortName>
    </recommendedName>
</protein>
<name>PSBP_CHLRE</name>
<keyword id="KW-0002">3D-structure</keyword>
<keyword id="KW-0150">Chloroplast</keyword>
<keyword id="KW-0472">Membrane</keyword>
<keyword id="KW-0602">Photosynthesis</keyword>
<keyword id="KW-0604">Photosystem II</keyword>
<keyword id="KW-0934">Plastid</keyword>
<keyword id="KW-0793">Thylakoid</keyword>
<keyword id="KW-0809">Transit peptide</keyword>
<reference key="1">
    <citation type="journal article" date="1987" name="Proc. Natl. Acad. Sci. U.S.A.">
        <title>Expression of the nuclear gene encoding oxygen-evolving enhancer protein 2 is required for high levels of photosynthetic oxygen evolution in Chlamydomonas reinhardtii.</title>
        <authorList>
            <person name="Mayfield S.P."/>
            <person name="Rahire M."/>
            <person name="Frank G."/>
            <person name="Zuber H."/>
            <person name="Rochaix J.-D."/>
        </authorList>
    </citation>
    <scope>NUCLEOTIDE SEQUENCE [MRNA]</scope>
</reference>
<proteinExistence type="evidence at protein level"/>
<dbReference type="EMBL" id="M15187">
    <property type="protein sequence ID" value="AAA33088.1"/>
    <property type="molecule type" value="mRNA"/>
</dbReference>
<dbReference type="PIR" id="S00413">
    <property type="entry name" value="S00413"/>
</dbReference>
<dbReference type="RefSeq" id="XP_001694126.1">
    <property type="nucleotide sequence ID" value="XM_001694074.1"/>
</dbReference>
<dbReference type="PDB" id="6KAC">
    <property type="method" value="EM"/>
    <property type="resolution" value="2.70 A"/>
    <property type="chains" value="P/p=1-245"/>
</dbReference>
<dbReference type="PDBsum" id="6KAC"/>
<dbReference type="EMDB" id="EMD-9955"/>
<dbReference type="SMR" id="P11471"/>
<dbReference type="PaxDb" id="3055-EDP03062"/>
<dbReference type="ProMEX" id="P11471"/>
<dbReference type="EnsemblPlants" id="PNW76019">
    <property type="protein sequence ID" value="PNW76019"/>
    <property type="gene ID" value="CHLRE_12g550850v5"/>
</dbReference>
<dbReference type="Gramene" id="PNW76019">
    <property type="protein sequence ID" value="PNW76019"/>
    <property type="gene ID" value="CHLRE_12g550850v5"/>
</dbReference>
<dbReference type="KEGG" id="cre:CHLRE_12g550850v5"/>
<dbReference type="eggNOG" id="ENOG502QUMW">
    <property type="taxonomic scope" value="Eukaryota"/>
</dbReference>
<dbReference type="OMA" id="WFKGQER"/>
<dbReference type="OrthoDB" id="507333at2759"/>
<dbReference type="GO" id="GO:0009535">
    <property type="term" value="C:chloroplast thylakoid membrane"/>
    <property type="evidence" value="ECO:0007669"/>
    <property type="project" value="UniProtKB-SubCell"/>
</dbReference>
<dbReference type="GO" id="GO:0019898">
    <property type="term" value="C:extrinsic component of membrane"/>
    <property type="evidence" value="ECO:0007669"/>
    <property type="project" value="InterPro"/>
</dbReference>
<dbReference type="GO" id="GO:0009654">
    <property type="term" value="C:photosystem II oxygen evolving complex"/>
    <property type="evidence" value="ECO:0007669"/>
    <property type="project" value="InterPro"/>
</dbReference>
<dbReference type="GO" id="GO:0005509">
    <property type="term" value="F:calcium ion binding"/>
    <property type="evidence" value="ECO:0007669"/>
    <property type="project" value="InterPro"/>
</dbReference>
<dbReference type="GO" id="GO:0015979">
    <property type="term" value="P:photosynthesis"/>
    <property type="evidence" value="ECO:0007669"/>
    <property type="project" value="UniProtKB-KW"/>
</dbReference>
<dbReference type="Gene3D" id="3.40.1000.10">
    <property type="entry name" value="Mog1/PsbP, alpha/beta/alpha sandwich"/>
    <property type="match status" value="1"/>
</dbReference>
<dbReference type="InterPro" id="IPR016123">
    <property type="entry name" value="Mog1/PsbP_a/b/a-sand"/>
</dbReference>
<dbReference type="InterPro" id="IPR002683">
    <property type="entry name" value="PsbP_C"/>
</dbReference>
<dbReference type="PANTHER" id="PTHR31407">
    <property type="match status" value="1"/>
</dbReference>
<dbReference type="PANTHER" id="PTHR31407:SF6">
    <property type="entry name" value="OXYGEN-EVOLVING ENHANCER PROTEIN 2-1, CHLOROPLASTIC"/>
    <property type="match status" value="1"/>
</dbReference>
<dbReference type="Pfam" id="PF01789">
    <property type="entry name" value="PsbP"/>
    <property type="match status" value="1"/>
</dbReference>
<dbReference type="SUPFAM" id="SSF55724">
    <property type="entry name" value="Mog1p/PsbP-like"/>
    <property type="match status" value="1"/>
</dbReference>
<organism>
    <name type="scientific">Chlamydomonas reinhardtii</name>
    <name type="common">Chlamydomonas smithii</name>
    <dbReference type="NCBI Taxonomy" id="3055"/>
    <lineage>
        <taxon>Eukaryota</taxon>
        <taxon>Viridiplantae</taxon>
        <taxon>Chlorophyta</taxon>
        <taxon>core chlorophytes</taxon>
        <taxon>Chlorophyceae</taxon>
        <taxon>CS clade</taxon>
        <taxon>Chlamydomonadales</taxon>
        <taxon>Chlamydomonadaceae</taxon>
        <taxon>Chlamydomonas</taxon>
    </lineage>
</organism>
<evidence type="ECO:0000305" key="1"/>
<evidence type="ECO:0007829" key="2">
    <source>
        <dbReference type="PDB" id="6KAC"/>
    </source>
</evidence>
<accession>P11471</accession>
<sequence length="245" mass="25899">MATALCNKAFAAAPVARPASRRSAVVVRASGSDVSRRAALAGFAGAAALVSSSPANAAYGDSANVFGKVTNKSGFVPYAGDGFALLLPAKWNPSKENDFPGVILRYEDNFDAVNNLVVIAQDTDKKAIADFGSQDKFLESVSYLLGKQAYSGETQSEGGFAPNRVSAASLLDVSTTTDKKGKTYYKYELLVRSADGDEGGRHQLIGATVGSDNKLYIIKIQIGDKRWFKGAKKEAMGAFDSFTVV</sequence>
<gene>
    <name type="primary">PSBP</name>
</gene>
<feature type="transit peptide" description="Chloroplast">
    <location>
        <begin position="1"/>
        <end position="57"/>
    </location>
</feature>
<feature type="chain" id="PRO_0000029574" description="Oxygen-evolving enhancer protein 2, chloroplastic">
    <location>
        <begin position="58"/>
        <end position="245"/>
    </location>
</feature>
<feature type="strand" evidence="2">
    <location>
        <begin position="73"/>
        <end position="79"/>
    </location>
</feature>
<feature type="strand" evidence="2">
    <location>
        <begin position="81"/>
        <end position="88"/>
    </location>
</feature>
<feature type="strand" evidence="2">
    <location>
        <begin position="91"/>
        <end position="93"/>
    </location>
</feature>
<feature type="strand" evidence="2">
    <location>
        <begin position="106"/>
        <end position="110"/>
    </location>
</feature>
<feature type="strand" evidence="2">
    <location>
        <begin position="114"/>
        <end position="122"/>
    </location>
</feature>
<feature type="helix" evidence="2">
    <location>
        <begin position="128"/>
        <end position="131"/>
    </location>
</feature>
<feature type="helix" evidence="2">
    <location>
        <begin position="134"/>
        <end position="138"/>
    </location>
</feature>
<feature type="helix" evidence="2">
    <location>
        <begin position="142"/>
        <end position="145"/>
    </location>
</feature>
<feature type="strand" evidence="2">
    <location>
        <begin position="157"/>
        <end position="160"/>
    </location>
</feature>
<feature type="strand" evidence="2">
    <location>
        <begin position="165"/>
        <end position="174"/>
    </location>
</feature>
<feature type="strand" evidence="2">
    <location>
        <begin position="185"/>
        <end position="195"/>
    </location>
</feature>
<feature type="helix" evidence="2">
    <location>
        <begin position="197"/>
        <end position="199"/>
    </location>
</feature>
<feature type="strand" evidence="2">
    <location>
        <begin position="200"/>
        <end position="209"/>
    </location>
</feature>
<feature type="strand" evidence="2">
    <location>
        <begin position="213"/>
        <end position="223"/>
    </location>
</feature>
<feature type="helix" evidence="2">
    <location>
        <begin position="224"/>
        <end position="227"/>
    </location>
</feature>
<feature type="turn" evidence="2">
    <location>
        <begin position="228"/>
        <end position="230"/>
    </location>
</feature>
<feature type="helix" evidence="2">
    <location>
        <begin position="231"/>
        <end position="240"/>
    </location>
</feature>
<comment type="function">
    <text>May be involved in the regulation of photosystem II. Required for high levels of photosynthesis oxygen evolution.</text>
</comment>
<comment type="subcellular location">
    <subcellularLocation>
        <location>Plastid</location>
        <location>Chloroplast thylakoid membrane</location>
    </subcellularLocation>
    <text>Associated with the photosystem II complex.</text>
</comment>
<comment type="miscellaneous">
    <text>OEE2 is not necessary for the accumulation of the core PSII particle or for the accumulation of either OEE1 or OEE3.</text>
</comment>
<comment type="similarity">
    <text evidence="1">Belongs to the PsbP family.</text>
</comment>